<protein>
    <recommendedName>
        <fullName>Arsenate reductase</fullName>
        <ecNumber evidence="1">1.20.4.1</ecNumber>
    </recommendedName>
    <alternativeName>
        <fullName>Arsenical pump modifier</fullName>
    </alternativeName>
</protein>
<gene>
    <name evidence="3" type="primary">arsC</name>
</gene>
<dbReference type="EC" id="1.20.4.1" evidence="1"/>
<dbReference type="EMBL" id="U38947">
    <property type="protein sequence ID" value="AAB09628.1"/>
    <property type="molecule type" value="Genomic_DNA"/>
</dbReference>
<dbReference type="SMR" id="P52147"/>
<dbReference type="GO" id="GO:0008794">
    <property type="term" value="F:arsenate reductase (glutaredoxin) activity"/>
    <property type="evidence" value="ECO:0007669"/>
    <property type="project" value="UniProtKB-EC"/>
</dbReference>
<dbReference type="GO" id="GO:0046685">
    <property type="term" value="P:response to arsenic-containing substance"/>
    <property type="evidence" value="ECO:0007669"/>
    <property type="project" value="UniProtKB-KW"/>
</dbReference>
<dbReference type="CDD" id="cd03034">
    <property type="entry name" value="ArsC_ArsC"/>
    <property type="match status" value="1"/>
</dbReference>
<dbReference type="FunFam" id="3.40.30.10:FF:000048">
    <property type="entry name" value="Arsenate reductase"/>
    <property type="match status" value="1"/>
</dbReference>
<dbReference type="Gene3D" id="3.40.30.10">
    <property type="entry name" value="Glutaredoxin"/>
    <property type="match status" value="1"/>
</dbReference>
<dbReference type="InterPro" id="IPR006659">
    <property type="entry name" value="Arsenate_reductase"/>
</dbReference>
<dbReference type="InterPro" id="IPR006660">
    <property type="entry name" value="Arsenate_reductase-like"/>
</dbReference>
<dbReference type="InterPro" id="IPR036249">
    <property type="entry name" value="Thioredoxin-like_sf"/>
</dbReference>
<dbReference type="NCBIfam" id="TIGR00014">
    <property type="entry name" value="arsC"/>
    <property type="match status" value="1"/>
</dbReference>
<dbReference type="NCBIfam" id="NF007456">
    <property type="entry name" value="PRK10026.1"/>
    <property type="match status" value="1"/>
</dbReference>
<dbReference type="PANTHER" id="PTHR30041">
    <property type="entry name" value="ARSENATE REDUCTASE"/>
    <property type="match status" value="1"/>
</dbReference>
<dbReference type="PANTHER" id="PTHR30041:SF5">
    <property type="entry name" value="ARSENATE REDUCTASE-RELATED"/>
    <property type="match status" value="1"/>
</dbReference>
<dbReference type="Pfam" id="PF03960">
    <property type="entry name" value="ArsC"/>
    <property type="match status" value="1"/>
</dbReference>
<dbReference type="SUPFAM" id="SSF52833">
    <property type="entry name" value="Thioredoxin-like"/>
    <property type="match status" value="1"/>
</dbReference>
<dbReference type="PROSITE" id="PS51353">
    <property type="entry name" value="ARSC"/>
    <property type="match status" value="1"/>
</dbReference>
<reference key="1">
    <citation type="journal article" date="1996" name="FEMS Microbiol. Lett.">
        <title>The arsenical resistance operon of IncN plasmid R46.</title>
        <authorList>
            <person name="Bruhn D.F."/>
            <person name="Li J."/>
            <person name="Silver S."/>
            <person name="Roberto F."/>
            <person name="Rosen B.P."/>
        </authorList>
    </citation>
    <scope>NUCLEOTIDE SEQUENCE [GENOMIC DNA]</scope>
</reference>
<organism>
    <name type="scientific">Escherichia coli</name>
    <dbReference type="NCBI Taxonomy" id="562"/>
    <lineage>
        <taxon>Bacteria</taxon>
        <taxon>Pseudomonadati</taxon>
        <taxon>Pseudomonadota</taxon>
        <taxon>Gammaproteobacteria</taxon>
        <taxon>Enterobacterales</taxon>
        <taxon>Enterobacteriaceae</taxon>
        <taxon>Escherichia</taxon>
    </lineage>
</organism>
<proteinExistence type="inferred from homology"/>
<comment type="function">
    <text evidence="1">Involved in resistance to arsenate. Catalyzes the reduction of arsenate [As(V)] to arsenite [As(III)].</text>
</comment>
<comment type="catalytic activity">
    <reaction evidence="1">
        <text>[glutaredoxin]-dithiol + arsenate + glutathione + H(+) = glutathionyl-S-S-[glutaredoxin] + arsenite + H2O</text>
        <dbReference type="Rhea" id="RHEA:22016"/>
        <dbReference type="Rhea" id="RHEA-COMP:10729"/>
        <dbReference type="Rhea" id="RHEA-COMP:17668"/>
        <dbReference type="ChEBI" id="CHEBI:15377"/>
        <dbReference type="ChEBI" id="CHEBI:15378"/>
        <dbReference type="ChEBI" id="CHEBI:29242"/>
        <dbReference type="ChEBI" id="CHEBI:29950"/>
        <dbReference type="ChEBI" id="CHEBI:48597"/>
        <dbReference type="ChEBI" id="CHEBI:57925"/>
        <dbReference type="ChEBI" id="CHEBI:146199"/>
        <dbReference type="EC" id="1.20.4.1"/>
    </reaction>
</comment>
<comment type="similarity">
    <text evidence="4">Belongs to the ArsC family.</text>
</comment>
<feature type="chain" id="PRO_0000162538" description="Arsenate reductase">
    <location>
        <begin position="1"/>
        <end position="141"/>
    </location>
</feature>
<feature type="active site" description="Nucleophile; cysteine thioarsenate intermediate" evidence="1 2">
    <location>
        <position position="12"/>
    </location>
</feature>
<feature type="site" description="Important for activity" evidence="1">
    <location>
        <position position="8"/>
    </location>
</feature>
<feature type="site" description="Important for activity" evidence="1">
    <location>
        <position position="60"/>
    </location>
</feature>
<feature type="site" description="Important for activity" evidence="1">
    <location>
        <position position="94"/>
    </location>
</feature>
<feature type="site" description="Important for activity" evidence="1">
    <location>
        <position position="107"/>
    </location>
</feature>
<name>ARSC2_ECOLX</name>
<evidence type="ECO:0000250" key="1">
    <source>
        <dbReference type="UniProtKB" id="P08692"/>
    </source>
</evidence>
<evidence type="ECO:0000255" key="2">
    <source>
        <dbReference type="PROSITE-ProRule" id="PRU01282"/>
    </source>
</evidence>
<evidence type="ECO:0000303" key="3">
    <source>
    </source>
</evidence>
<evidence type="ECO:0000305" key="4"/>
<sequence>MSNITIYHNPHCGTSRNTLEMIRNSGIEPTVILYLETPPSRDELLKLIADMGISVRALLRKNVEPYEELGLAEDKFTDDQLIDFMLQHPILINRPIVVTPLGTKLCRPSEVVLDILPDAQKAAFTKEDGEKVVDDSGKRLK</sequence>
<geneLocation type="plasmid">
    <name>IncN R46</name>
</geneLocation>
<keyword id="KW-0059">Arsenical resistance</keyword>
<keyword id="KW-0560">Oxidoreductase</keyword>
<keyword id="KW-0614">Plasmid</keyword>
<accession>P52147</accession>